<organism>
    <name type="scientific">Caenorhabditis elegans</name>
    <dbReference type="NCBI Taxonomy" id="6239"/>
    <lineage>
        <taxon>Eukaryota</taxon>
        <taxon>Metazoa</taxon>
        <taxon>Ecdysozoa</taxon>
        <taxon>Nematoda</taxon>
        <taxon>Chromadorea</taxon>
        <taxon>Rhabditida</taxon>
        <taxon>Rhabditina</taxon>
        <taxon>Rhabditomorpha</taxon>
        <taxon>Rhabditoidea</taxon>
        <taxon>Rhabditidae</taxon>
        <taxon>Peloderinae</taxon>
        <taxon>Caenorhabditis</taxon>
    </lineage>
</organism>
<keyword id="KW-1185">Reference proteome</keyword>
<keyword id="KW-0677">Repeat</keyword>
<reference key="1">
    <citation type="journal article" date="1998" name="Science">
        <title>Genome sequence of the nematode C. elegans: a platform for investigating biology.</title>
        <authorList>
            <consortium name="The C. elegans sequencing consortium"/>
        </authorList>
    </citation>
    <scope>NUCLEOTIDE SEQUENCE [LARGE SCALE GENOMIC DNA]</scope>
    <source>
        <strain>Bristol N2</strain>
    </source>
</reference>
<reference key="2">
    <citation type="journal article" date="2007" name="PLoS Biol.">
        <title>High-throughput in vivo analysis of gene expression in Caenorhabditis elegans.</title>
        <authorList>
            <person name="Hunt-Newbury R."/>
            <person name="Viveiros R."/>
            <person name="Johnsen R."/>
            <person name="Mah A."/>
            <person name="Anastas D."/>
            <person name="Fang L."/>
            <person name="Halfnight E."/>
            <person name="Lee D."/>
            <person name="Lin J."/>
            <person name="Lorch A."/>
            <person name="McKay S."/>
            <person name="Okada H.M."/>
            <person name="Pan J."/>
            <person name="Schulz A.K."/>
            <person name="Tu D."/>
            <person name="Wong K."/>
            <person name="Zhao Z."/>
            <person name="Alexeyenko A."/>
            <person name="Burglin T."/>
            <person name="Sonnhammer E."/>
            <person name="Schnabel R."/>
            <person name="Jones S.J."/>
            <person name="Marra M.A."/>
            <person name="Baillie D.L."/>
            <person name="Moerman D.G."/>
        </authorList>
    </citation>
    <scope>TISSUE SPECIFICITY</scope>
</reference>
<reference key="3">
    <citation type="journal article" date="2008" name="Aging Cell">
        <title>Glyoxalase-1 prevents mitochondrial protein modification and enhances lifespan in Caenorhabditis elegans.</title>
        <authorList>
            <person name="Morcos M."/>
            <person name="Du X."/>
            <person name="Pfisterer F."/>
            <person name="Hutter H."/>
            <person name="Sayed A.A.R."/>
            <person name="Thornalley P."/>
            <person name="Ahmed N."/>
            <person name="Baynes J."/>
            <person name="Thorpe S."/>
            <person name="Kukudov G."/>
            <person name="Schlotterer A."/>
            <person name="Bozorgmehr F."/>
            <person name="El Baki R.A."/>
            <person name="Stern D."/>
            <person name="Moehrlen F."/>
            <person name="Ibrahim Y."/>
            <person name="Oikonomou D."/>
            <person name="Hamann A."/>
            <person name="Becker C."/>
            <person name="Zeier M."/>
            <person name="Schwenger V."/>
            <person name="Miftari N."/>
            <person name="Humpert P."/>
            <person name="Hammes H.-P."/>
            <person name="Buechler M."/>
            <person name="Bierhaus A."/>
            <person name="Brownlee M."/>
            <person name="Nawroth P.P."/>
        </authorList>
    </citation>
    <scope>FUNCTION</scope>
</reference>
<accession>Q09253</accession>
<gene>
    <name type="primary">glod-4</name>
    <name type="synonym">tag-73</name>
    <name type="ORF">C16C10.10</name>
</gene>
<protein>
    <recommendedName>
        <fullName>Glyoxalase 1</fullName>
        <shortName>CeGly</shortName>
    </recommendedName>
    <alternativeName>
        <fullName>Glyoxalase domain-containing protein 4</fullName>
    </alternativeName>
</protein>
<comment type="function">
    <text evidence="3">Thought to act as a glyoxalase. May remove methylglyoxal from mitochondrial proteins. Has roles in reducing oxidative stress and increasing lifespan.</text>
</comment>
<comment type="tissue specificity">
    <text evidence="2">Expressed in the following tissues in both larvae and adults: pharynx, pharyngeal-intestinal valve, intestine, anal sphincter, vulval muscle, seam cells and the nervous system.</text>
</comment>
<comment type="developmental stage">
    <text>Expression increases from day 1 to day 12 but activity decreased 10-fold during this period indicating that post translational modification is operational.</text>
</comment>
<comment type="similarity">
    <text evidence="4">Belongs to the glyoxalase I family.</text>
</comment>
<dbReference type="EMBL" id="Z46787">
    <property type="protein sequence ID" value="CAA86748.1"/>
    <property type="molecule type" value="Genomic_DNA"/>
</dbReference>
<dbReference type="PIR" id="T19331">
    <property type="entry name" value="T19331"/>
</dbReference>
<dbReference type="RefSeq" id="NP_497827.1">
    <property type="nucleotide sequence ID" value="NM_065426.5"/>
</dbReference>
<dbReference type="SMR" id="Q09253"/>
<dbReference type="BioGRID" id="40767">
    <property type="interactions" value="9"/>
</dbReference>
<dbReference type="FunCoup" id="Q09253">
    <property type="interactions" value="1552"/>
</dbReference>
<dbReference type="STRING" id="6239.C16C10.10.1"/>
<dbReference type="PaxDb" id="6239-C16C10.10"/>
<dbReference type="PeptideAtlas" id="Q09253"/>
<dbReference type="EnsemblMetazoa" id="C16C10.10.1">
    <property type="protein sequence ID" value="C16C10.10.1"/>
    <property type="gene ID" value="WBGene00006448"/>
</dbReference>
<dbReference type="GeneID" id="175530"/>
<dbReference type="KEGG" id="cel:CELE_C16C10.10"/>
<dbReference type="AGR" id="WB:WBGene00006448"/>
<dbReference type="CTD" id="175530"/>
<dbReference type="WormBase" id="C16C10.10">
    <property type="protein sequence ID" value="CE01490"/>
    <property type="gene ID" value="WBGene00006448"/>
    <property type="gene designation" value="glod-4"/>
</dbReference>
<dbReference type="eggNOG" id="KOG2943">
    <property type="taxonomic scope" value="Eukaryota"/>
</dbReference>
<dbReference type="GeneTree" id="ENSGT00390000012340"/>
<dbReference type="HOGENOM" id="CLU_044479_0_0_1"/>
<dbReference type="InParanoid" id="Q09253"/>
<dbReference type="OMA" id="CDAECNG"/>
<dbReference type="OrthoDB" id="1545884at2759"/>
<dbReference type="PhylomeDB" id="Q09253"/>
<dbReference type="PRO" id="PR:Q09253"/>
<dbReference type="Proteomes" id="UP000001940">
    <property type="component" value="Chromosome III"/>
</dbReference>
<dbReference type="Bgee" id="WBGene00006448">
    <property type="expression patterns" value="Expressed in germ line (C elegans) and 4 other cell types or tissues"/>
</dbReference>
<dbReference type="GO" id="GO:0008340">
    <property type="term" value="P:determination of adult lifespan"/>
    <property type="evidence" value="ECO:0000315"/>
    <property type="project" value="UniProtKB"/>
</dbReference>
<dbReference type="GO" id="GO:0009438">
    <property type="term" value="P:methylglyoxal metabolic process"/>
    <property type="evidence" value="ECO:0000315"/>
    <property type="project" value="UniProtKB"/>
</dbReference>
<dbReference type="CDD" id="cd16357">
    <property type="entry name" value="GLOD4_C"/>
    <property type="match status" value="1"/>
</dbReference>
<dbReference type="Gene3D" id="3.10.180.10">
    <property type="entry name" value="2,3-Dihydroxybiphenyl 1,2-Dioxygenase, domain 1"/>
    <property type="match status" value="2"/>
</dbReference>
<dbReference type="InterPro" id="IPR043193">
    <property type="entry name" value="GLOD4"/>
</dbReference>
<dbReference type="InterPro" id="IPR043194">
    <property type="entry name" value="GLOD4_C"/>
</dbReference>
<dbReference type="InterPro" id="IPR029068">
    <property type="entry name" value="Glyas_Bleomycin-R_OHBP_Dase"/>
</dbReference>
<dbReference type="InterPro" id="IPR004360">
    <property type="entry name" value="Glyas_Fos-R_dOase_dom"/>
</dbReference>
<dbReference type="InterPro" id="IPR037523">
    <property type="entry name" value="VOC"/>
</dbReference>
<dbReference type="PANTHER" id="PTHR46466">
    <property type="entry name" value="GLYOXALASE DOMAIN-CONTAINING PROTEIN 4"/>
    <property type="match status" value="1"/>
</dbReference>
<dbReference type="PANTHER" id="PTHR46466:SF1">
    <property type="entry name" value="GLYOXALASE DOMAIN-CONTAINING PROTEIN 4"/>
    <property type="match status" value="1"/>
</dbReference>
<dbReference type="Pfam" id="PF21701">
    <property type="entry name" value="GLOD4_C"/>
    <property type="match status" value="1"/>
</dbReference>
<dbReference type="Pfam" id="PF00903">
    <property type="entry name" value="Glyoxalase"/>
    <property type="match status" value="1"/>
</dbReference>
<dbReference type="SUPFAM" id="SSF54593">
    <property type="entry name" value="Glyoxalase/Bleomycin resistance protein/Dihydroxybiphenyl dioxygenase"/>
    <property type="match status" value="2"/>
</dbReference>
<dbReference type="PROSITE" id="PS51819">
    <property type="entry name" value="VOC"/>
    <property type="match status" value="2"/>
</dbReference>
<feature type="chain" id="PRO_0000065184" description="Glyoxalase 1">
    <location>
        <begin position="1"/>
        <end position="281"/>
    </location>
</feature>
<feature type="domain" description="VOC 1" evidence="1">
    <location>
        <begin position="4"/>
        <end position="127"/>
    </location>
</feature>
<feature type="domain" description="VOC 2" evidence="1">
    <location>
        <begin position="132"/>
        <end position="251"/>
    </location>
</feature>
<evidence type="ECO:0000255" key="1">
    <source>
        <dbReference type="PROSITE-ProRule" id="PRU01163"/>
    </source>
</evidence>
<evidence type="ECO:0000269" key="2">
    <source>
    </source>
</evidence>
<evidence type="ECO:0000269" key="3">
    <source>
    </source>
</evidence>
<evidence type="ECO:0000305" key="4"/>
<name>GLOD4_CAEEL</name>
<proteinExistence type="evidence at transcript level"/>
<sequence length="281" mass="32093">MTARALHYVFKVANRAKTIDFFTNVLNMKVLRHEEFEKGCEATCNGPYNGRWSKTMIGYGSEDEHFVLEITYNYPIHKYELGNDYRAIVIDSDQLFEKVEKINHRKSGCGRLAVKDPDGHEFKIGKADQSPKVLRVQVNVGDLEKSKKYWNETLGMPIVEEKSSRIRMSYGDGQCELEIVKSQDKIDRKTGFGRIAFSYPEDKLESLQDKIKSANGTIINELTTLETPGKADVQVVILADPDEHEICFVGDEGFRALSKIDDKAESELKEQIKKDDSEKWI</sequence>